<gene>
    <name type="primary">FAM229B</name>
</gene>
<comment type="similarity">
    <text evidence="2">Belongs to the FAM229 family.</text>
</comment>
<protein>
    <recommendedName>
        <fullName>Protein FAM229B</fullName>
    </recommendedName>
</protein>
<reference key="1">
    <citation type="submission" date="2006-09" db="EMBL/GenBank/DDBJ databases">
        <authorList>
            <consortium name="NIH - Mammalian Gene Collection (MGC) project"/>
        </authorList>
    </citation>
    <scope>NUCLEOTIDE SEQUENCE [LARGE SCALE MRNA]</scope>
    <source>
        <strain>Crossbred X Angus</strain>
        <tissue>Liver</tissue>
    </source>
</reference>
<evidence type="ECO:0000256" key="1">
    <source>
        <dbReference type="SAM" id="MobiDB-lite"/>
    </source>
</evidence>
<evidence type="ECO:0000305" key="2"/>
<name>F229B_BOVIN</name>
<organism>
    <name type="scientific">Bos taurus</name>
    <name type="common">Bovine</name>
    <dbReference type="NCBI Taxonomy" id="9913"/>
    <lineage>
        <taxon>Eukaryota</taxon>
        <taxon>Metazoa</taxon>
        <taxon>Chordata</taxon>
        <taxon>Craniata</taxon>
        <taxon>Vertebrata</taxon>
        <taxon>Euteleostomi</taxon>
        <taxon>Mammalia</taxon>
        <taxon>Eutheria</taxon>
        <taxon>Laurasiatheria</taxon>
        <taxon>Artiodactyla</taxon>
        <taxon>Ruminantia</taxon>
        <taxon>Pecora</taxon>
        <taxon>Bovidae</taxon>
        <taxon>Bovinae</taxon>
        <taxon>Bos</taxon>
    </lineage>
</organism>
<feature type="chain" id="PRO_0000335815" description="Protein FAM229B">
    <location>
        <begin position="1"/>
        <end position="80"/>
    </location>
</feature>
<feature type="region of interest" description="Disordered" evidence="1">
    <location>
        <begin position="1"/>
        <end position="44"/>
    </location>
</feature>
<accession>Q0D252</accession>
<proteinExistence type="inferred from homology"/>
<keyword id="KW-1185">Reference proteome</keyword>
<dbReference type="EMBL" id="BC123382">
    <property type="protein sequence ID" value="AAI23383.1"/>
    <property type="molecule type" value="mRNA"/>
</dbReference>
<dbReference type="RefSeq" id="NP_001181996.1">
    <property type="nucleotide sequence ID" value="NM_001195067.1"/>
</dbReference>
<dbReference type="RefSeq" id="XP_005210879.1">
    <property type="nucleotide sequence ID" value="XM_005210822.5"/>
</dbReference>
<dbReference type="RefSeq" id="XP_010806750.1">
    <property type="nucleotide sequence ID" value="XM_010808448.2"/>
</dbReference>
<dbReference type="RefSeq" id="XP_010806751.1">
    <property type="nucleotide sequence ID" value="XM_010808449.4"/>
</dbReference>
<dbReference type="RefSeq" id="XP_015328303.1">
    <property type="nucleotide sequence ID" value="XM_015472817.1"/>
</dbReference>
<dbReference type="RefSeq" id="XP_024852622.1">
    <property type="nucleotide sequence ID" value="XM_024996854.2"/>
</dbReference>
<dbReference type="RefSeq" id="XP_059745833.1">
    <property type="nucleotide sequence ID" value="XM_059889850.1"/>
</dbReference>
<dbReference type="RefSeq" id="XP_059745834.1">
    <property type="nucleotide sequence ID" value="XM_059889851.1"/>
</dbReference>
<dbReference type="RefSeq" id="XP_059745835.1">
    <property type="nucleotide sequence ID" value="XM_059889852.1"/>
</dbReference>
<dbReference type="RefSeq" id="XP_059745836.1">
    <property type="nucleotide sequence ID" value="XM_059889853.1"/>
</dbReference>
<dbReference type="RefSeq" id="XP_059745837.1">
    <property type="nucleotide sequence ID" value="XM_059889854.1"/>
</dbReference>
<dbReference type="RefSeq" id="XP_059745838.1">
    <property type="nucleotide sequence ID" value="XM_059889855.1"/>
</dbReference>
<dbReference type="RefSeq" id="XP_059745839.1">
    <property type="nucleotide sequence ID" value="XM_059889856.1"/>
</dbReference>
<dbReference type="RefSeq" id="XP_059745840.1">
    <property type="nucleotide sequence ID" value="XM_059889857.1"/>
</dbReference>
<dbReference type="FunCoup" id="Q0D252">
    <property type="interactions" value="458"/>
</dbReference>
<dbReference type="STRING" id="9913.ENSBTAP00000044757"/>
<dbReference type="PaxDb" id="9913-ENSBTAP00000044757"/>
<dbReference type="Ensembl" id="ENSBTAT00000047557.3">
    <property type="protein sequence ID" value="ENSBTAP00000044757.2"/>
    <property type="gene ID" value="ENSBTAG00000033429.3"/>
</dbReference>
<dbReference type="GeneID" id="777592"/>
<dbReference type="KEGG" id="bta:777592"/>
<dbReference type="CTD" id="619208"/>
<dbReference type="VEuPathDB" id="HostDB:ENSBTAG00000033429"/>
<dbReference type="VGNC" id="VGNC:28804">
    <property type="gene designation" value="FAM229B"/>
</dbReference>
<dbReference type="eggNOG" id="ENOG502TEG8">
    <property type="taxonomic scope" value="Eukaryota"/>
</dbReference>
<dbReference type="GeneTree" id="ENSGT00390000017996"/>
<dbReference type="HOGENOM" id="CLU_2589122_0_0_1"/>
<dbReference type="InParanoid" id="Q0D252"/>
<dbReference type="OMA" id="ACNGKET"/>
<dbReference type="OrthoDB" id="9818842at2759"/>
<dbReference type="TreeFam" id="TF339579"/>
<dbReference type="Proteomes" id="UP000009136">
    <property type="component" value="Chromosome 9"/>
</dbReference>
<dbReference type="Bgee" id="ENSBTAG00000033429">
    <property type="expression patterns" value="Expressed in semen and 106 other cell types or tissues"/>
</dbReference>
<dbReference type="InterPro" id="IPR028025">
    <property type="entry name" value="FAM229"/>
</dbReference>
<dbReference type="PANTHER" id="PTHR35355">
    <property type="entry name" value="PROTEIN FAM229A"/>
    <property type="match status" value="1"/>
</dbReference>
<dbReference type="PANTHER" id="PTHR35355:SF2">
    <property type="entry name" value="PROTEIN FAM229B"/>
    <property type="match status" value="1"/>
</dbReference>
<dbReference type="Pfam" id="PF14982">
    <property type="entry name" value="UPF0731"/>
    <property type="match status" value="1"/>
</dbReference>
<sequence length="80" mass="8717">MPFRFGTQPRRFPVEGGDSSIGLEPGLSSSATCNGKEMSPTRQLRRCPGSHCLTITDVPITVYAAMRKPPAQSSKEMHPK</sequence>